<evidence type="ECO:0000255" key="1">
    <source>
        <dbReference type="HAMAP-Rule" id="MF_01364"/>
    </source>
</evidence>
<evidence type="ECO:0000305" key="2"/>
<accession>B9K899</accession>
<comment type="function">
    <text evidence="1">Binds 16S rRNA, required for the assembly of 30S particles and may also be responsible for determining the conformation of the 16S rRNA at the A site.</text>
</comment>
<comment type="cofactor">
    <cofactor evidence="1">
        <name>Zn(2+)</name>
        <dbReference type="ChEBI" id="CHEBI:29105"/>
    </cofactor>
    <text evidence="1">Binds 1 zinc ion per subunit.</text>
</comment>
<comment type="subunit">
    <text evidence="1">Part of the 30S ribosomal subunit. Contacts proteins S3 and S10.</text>
</comment>
<comment type="similarity">
    <text evidence="1">Belongs to the universal ribosomal protein uS14 family. Zinc-binding uS14 subfamily.</text>
</comment>
<dbReference type="EMBL" id="CP000916">
    <property type="protein sequence ID" value="ACM23182.1"/>
    <property type="molecule type" value="Genomic_DNA"/>
</dbReference>
<dbReference type="RefSeq" id="WP_008195018.1">
    <property type="nucleotide sequence ID" value="NC_011978.1"/>
</dbReference>
<dbReference type="SMR" id="B9K899"/>
<dbReference type="STRING" id="309803.CTN_1006"/>
<dbReference type="KEGG" id="tna:CTN_1006"/>
<dbReference type="eggNOG" id="COG0199">
    <property type="taxonomic scope" value="Bacteria"/>
</dbReference>
<dbReference type="HOGENOM" id="CLU_139869_3_0_0"/>
<dbReference type="Proteomes" id="UP000000445">
    <property type="component" value="Chromosome"/>
</dbReference>
<dbReference type="GO" id="GO:0005737">
    <property type="term" value="C:cytoplasm"/>
    <property type="evidence" value="ECO:0007669"/>
    <property type="project" value="UniProtKB-ARBA"/>
</dbReference>
<dbReference type="GO" id="GO:0015935">
    <property type="term" value="C:small ribosomal subunit"/>
    <property type="evidence" value="ECO:0007669"/>
    <property type="project" value="TreeGrafter"/>
</dbReference>
<dbReference type="GO" id="GO:0019843">
    <property type="term" value="F:rRNA binding"/>
    <property type="evidence" value="ECO:0007669"/>
    <property type="project" value="UniProtKB-UniRule"/>
</dbReference>
<dbReference type="GO" id="GO:0003735">
    <property type="term" value="F:structural constituent of ribosome"/>
    <property type="evidence" value="ECO:0007669"/>
    <property type="project" value="InterPro"/>
</dbReference>
<dbReference type="GO" id="GO:0008270">
    <property type="term" value="F:zinc ion binding"/>
    <property type="evidence" value="ECO:0007669"/>
    <property type="project" value="UniProtKB-UniRule"/>
</dbReference>
<dbReference type="GO" id="GO:0006412">
    <property type="term" value="P:translation"/>
    <property type="evidence" value="ECO:0007669"/>
    <property type="project" value="UniProtKB-UniRule"/>
</dbReference>
<dbReference type="FunFam" id="4.10.830.10:FF:000001">
    <property type="entry name" value="30S ribosomal protein S14 type Z"/>
    <property type="match status" value="1"/>
</dbReference>
<dbReference type="Gene3D" id="4.10.830.10">
    <property type="entry name" value="30s Ribosomal Protein S14, Chain N"/>
    <property type="match status" value="1"/>
</dbReference>
<dbReference type="HAMAP" id="MF_01364_B">
    <property type="entry name" value="Ribosomal_uS14_2_B"/>
    <property type="match status" value="1"/>
</dbReference>
<dbReference type="InterPro" id="IPR001209">
    <property type="entry name" value="Ribosomal_uS14"/>
</dbReference>
<dbReference type="InterPro" id="IPR023053">
    <property type="entry name" value="Ribosomal_uS14_bact"/>
</dbReference>
<dbReference type="InterPro" id="IPR018271">
    <property type="entry name" value="Ribosomal_uS14_CS"/>
</dbReference>
<dbReference type="InterPro" id="IPR043140">
    <property type="entry name" value="Ribosomal_uS14_sf"/>
</dbReference>
<dbReference type="NCBIfam" id="NF005974">
    <property type="entry name" value="PRK08061.1"/>
    <property type="match status" value="1"/>
</dbReference>
<dbReference type="PANTHER" id="PTHR19836">
    <property type="entry name" value="30S RIBOSOMAL PROTEIN S14"/>
    <property type="match status" value="1"/>
</dbReference>
<dbReference type="PANTHER" id="PTHR19836:SF19">
    <property type="entry name" value="SMALL RIBOSOMAL SUBUNIT PROTEIN US14M"/>
    <property type="match status" value="1"/>
</dbReference>
<dbReference type="Pfam" id="PF00253">
    <property type="entry name" value="Ribosomal_S14"/>
    <property type="match status" value="1"/>
</dbReference>
<dbReference type="SUPFAM" id="SSF57716">
    <property type="entry name" value="Glucocorticoid receptor-like (DNA-binding domain)"/>
    <property type="match status" value="1"/>
</dbReference>
<dbReference type="PROSITE" id="PS00527">
    <property type="entry name" value="RIBOSOMAL_S14"/>
    <property type="match status" value="1"/>
</dbReference>
<name>RS14Z_THENN</name>
<feature type="chain" id="PRO_1000166782" description="Small ribosomal subunit protein uS14">
    <location>
        <begin position="1"/>
        <end position="61"/>
    </location>
</feature>
<feature type="binding site" evidence="1">
    <location>
        <position position="24"/>
    </location>
    <ligand>
        <name>Zn(2+)</name>
        <dbReference type="ChEBI" id="CHEBI:29105"/>
    </ligand>
</feature>
<feature type="binding site" evidence="1">
    <location>
        <position position="27"/>
    </location>
    <ligand>
        <name>Zn(2+)</name>
        <dbReference type="ChEBI" id="CHEBI:29105"/>
    </ligand>
</feature>
<feature type="binding site" evidence="1">
    <location>
        <position position="40"/>
    </location>
    <ligand>
        <name>Zn(2+)</name>
        <dbReference type="ChEBI" id="CHEBI:29105"/>
    </ligand>
</feature>
<feature type="binding site" evidence="1">
    <location>
        <position position="43"/>
    </location>
    <ligand>
        <name>Zn(2+)</name>
        <dbReference type="ChEBI" id="CHEBI:29105"/>
    </ligand>
</feature>
<gene>
    <name evidence="1" type="primary">rpsZ</name>
    <name evidence="1" type="synonym">rpsN</name>
    <name type="ordered locus">CTN_1006</name>
</gene>
<sequence length="61" mass="7329">MAKKAMIERWKKPKKYKVREYTRCHICGRPRAVYREFGLCRVCFRKLALEGKLPGVRKASW</sequence>
<reference key="1">
    <citation type="submission" date="2007-11" db="EMBL/GenBank/DDBJ databases">
        <title>The genome sequence of the hyperthermophilic bacterium Thermotoga neapolitana.</title>
        <authorList>
            <person name="Lim S.K."/>
            <person name="Kim J.S."/>
            <person name="Cha S.H."/>
            <person name="Park B.C."/>
            <person name="Lee D.S."/>
            <person name="Tae H.S."/>
            <person name="Kim S.-J."/>
            <person name="Kim J.J."/>
            <person name="Park K.J."/>
            <person name="Lee S.Y."/>
        </authorList>
    </citation>
    <scope>NUCLEOTIDE SEQUENCE [LARGE SCALE GENOMIC DNA]</scope>
    <source>
        <strain>ATCC 49049 / DSM 4359 / NBRC 107923 / NS-E</strain>
    </source>
</reference>
<protein>
    <recommendedName>
        <fullName evidence="1">Small ribosomal subunit protein uS14</fullName>
    </recommendedName>
    <alternativeName>
        <fullName evidence="2">30S ribosomal protein S14 type Z</fullName>
    </alternativeName>
</protein>
<keyword id="KW-0479">Metal-binding</keyword>
<keyword id="KW-0687">Ribonucleoprotein</keyword>
<keyword id="KW-0689">Ribosomal protein</keyword>
<keyword id="KW-0694">RNA-binding</keyword>
<keyword id="KW-0699">rRNA-binding</keyword>
<keyword id="KW-0862">Zinc</keyword>
<proteinExistence type="inferred from homology"/>
<organism>
    <name type="scientific">Thermotoga neapolitana (strain ATCC 49049 / DSM 4359 / NBRC 107923 / NS-E)</name>
    <dbReference type="NCBI Taxonomy" id="309803"/>
    <lineage>
        <taxon>Bacteria</taxon>
        <taxon>Thermotogati</taxon>
        <taxon>Thermotogota</taxon>
        <taxon>Thermotogae</taxon>
        <taxon>Thermotogales</taxon>
        <taxon>Thermotogaceae</taxon>
        <taxon>Thermotoga</taxon>
    </lineage>
</organism>